<keyword id="KW-0479">Metal-binding</keyword>
<keyword id="KW-1185">Reference proteome</keyword>
<keyword id="KW-0687">Ribonucleoprotein</keyword>
<keyword id="KW-0689">Ribosomal protein</keyword>
<keyword id="KW-0694">RNA-binding</keyword>
<keyword id="KW-0699">rRNA-binding</keyword>
<keyword id="KW-0862">Zinc</keyword>
<feature type="chain" id="PRO_1000067971" description="Small ribosomal subunit protein uS14">
    <location>
        <begin position="1"/>
        <end position="61"/>
    </location>
</feature>
<feature type="binding site" evidence="1">
    <location>
        <position position="24"/>
    </location>
    <ligand>
        <name>Zn(2+)</name>
        <dbReference type="ChEBI" id="CHEBI:29105"/>
    </ligand>
</feature>
<feature type="binding site" evidence="1">
    <location>
        <position position="27"/>
    </location>
    <ligand>
        <name>Zn(2+)</name>
        <dbReference type="ChEBI" id="CHEBI:29105"/>
    </ligand>
</feature>
<feature type="binding site" evidence="1">
    <location>
        <position position="40"/>
    </location>
    <ligand>
        <name>Zn(2+)</name>
        <dbReference type="ChEBI" id="CHEBI:29105"/>
    </ligand>
</feature>
<feature type="binding site" evidence="1">
    <location>
        <position position="43"/>
    </location>
    <ligand>
        <name>Zn(2+)</name>
        <dbReference type="ChEBI" id="CHEBI:29105"/>
    </ligand>
</feature>
<protein>
    <recommendedName>
        <fullName evidence="1">Small ribosomal subunit protein uS14</fullName>
    </recommendedName>
    <alternativeName>
        <fullName evidence="2">30S ribosomal protein S14 type Z</fullName>
    </alternativeName>
</protein>
<dbReference type="EMBL" id="CP000812">
    <property type="protein sequence ID" value="ABV33158.1"/>
    <property type="molecule type" value="Genomic_DNA"/>
</dbReference>
<dbReference type="RefSeq" id="WP_012002639.1">
    <property type="nucleotide sequence ID" value="NZ_BSDV01000001.1"/>
</dbReference>
<dbReference type="SMR" id="A8F4S4"/>
<dbReference type="STRING" id="416591.Tlet_0592"/>
<dbReference type="KEGG" id="tle:Tlet_0592"/>
<dbReference type="eggNOG" id="COG0199">
    <property type="taxonomic scope" value="Bacteria"/>
</dbReference>
<dbReference type="HOGENOM" id="CLU_139869_3_0_0"/>
<dbReference type="OrthoDB" id="9810484at2"/>
<dbReference type="Proteomes" id="UP000002016">
    <property type="component" value="Chromosome"/>
</dbReference>
<dbReference type="GO" id="GO:0005737">
    <property type="term" value="C:cytoplasm"/>
    <property type="evidence" value="ECO:0007669"/>
    <property type="project" value="UniProtKB-ARBA"/>
</dbReference>
<dbReference type="GO" id="GO:0015935">
    <property type="term" value="C:small ribosomal subunit"/>
    <property type="evidence" value="ECO:0007669"/>
    <property type="project" value="TreeGrafter"/>
</dbReference>
<dbReference type="GO" id="GO:0019843">
    <property type="term" value="F:rRNA binding"/>
    <property type="evidence" value="ECO:0007669"/>
    <property type="project" value="UniProtKB-UniRule"/>
</dbReference>
<dbReference type="GO" id="GO:0003735">
    <property type="term" value="F:structural constituent of ribosome"/>
    <property type="evidence" value="ECO:0007669"/>
    <property type="project" value="InterPro"/>
</dbReference>
<dbReference type="GO" id="GO:0008270">
    <property type="term" value="F:zinc ion binding"/>
    <property type="evidence" value="ECO:0007669"/>
    <property type="project" value="UniProtKB-UniRule"/>
</dbReference>
<dbReference type="GO" id="GO:0006412">
    <property type="term" value="P:translation"/>
    <property type="evidence" value="ECO:0007669"/>
    <property type="project" value="UniProtKB-UniRule"/>
</dbReference>
<dbReference type="FunFam" id="4.10.830.10:FF:000001">
    <property type="entry name" value="30S ribosomal protein S14 type Z"/>
    <property type="match status" value="1"/>
</dbReference>
<dbReference type="Gene3D" id="4.10.830.10">
    <property type="entry name" value="30s Ribosomal Protein S14, Chain N"/>
    <property type="match status" value="1"/>
</dbReference>
<dbReference type="HAMAP" id="MF_01364_B">
    <property type="entry name" value="Ribosomal_uS14_2_B"/>
    <property type="match status" value="1"/>
</dbReference>
<dbReference type="InterPro" id="IPR001209">
    <property type="entry name" value="Ribosomal_uS14"/>
</dbReference>
<dbReference type="InterPro" id="IPR023053">
    <property type="entry name" value="Ribosomal_uS14_bact"/>
</dbReference>
<dbReference type="InterPro" id="IPR018271">
    <property type="entry name" value="Ribosomal_uS14_CS"/>
</dbReference>
<dbReference type="InterPro" id="IPR043140">
    <property type="entry name" value="Ribosomal_uS14_sf"/>
</dbReference>
<dbReference type="NCBIfam" id="NF005974">
    <property type="entry name" value="PRK08061.1"/>
    <property type="match status" value="1"/>
</dbReference>
<dbReference type="PANTHER" id="PTHR19836">
    <property type="entry name" value="30S RIBOSOMAL PROTEIN S14"/>
    <property type="match status" value="1"/>
</dbReference>
<dbReference type="PANTHER" id="PTHR19836:SF19">
    <property type="entry name" value="SMALL RIBOSOMAL SUBUNIT PROTEIN US14M"/>
    <property type="match status" value="1"/>
</dbReference>
<dbReference type="Pfam" id="PF00253">
    <property type="entry name" value="Ribosomal_S14"/>
    <property type="match status" value="1"/>
</dbReference>
<dbReference type="SUPFAM" id="SSF57716">
    <property type="entry name" value="Glucocorticoid receptor-like (DNA-binding domain)"/>
    <property type="match status" value="1"/>
</dbReference>
<dbReference type="PROSITE" id="PS00527">
    <property type="entry name" value="RIBOSOMAL_S14"/>
    <property type="match status" value="1"/>
</dbReference>
<sequence>MPRKGIIERWKRPKKFKVREYTRCSVCGRPKAVYREFGLCRVCFRKMALEGKLPGVKKASW</sequence>
<comment type="function">
    <text evidence="1">Binds 16S rRNA, required for the assembly of 30S particles and may also be responsible for determining the conformation of the 16S rRNA at the A site.</text>
</comment>
<comment type="cofactor">
    <cofactor evidence="1">
        <name>Zn(2+)</name>
        <dbReference type="ChEBI" id="CHEBI:29105"/>
    </cofactor>
    <text evidence="1">Binds 1 zinc ion per subunit.</text>
</comment>
<comment type="subunit">
    <text evidence="1">Part of the 30S ribosomal subunit. Contacts proteins S3 and S10.</text>
</comment>
<comment type="similarity">
    <text evidence="1">Belongs to the universal ribosomal protein uS14 family. Zinc-binding uS14 subfamily.</text>
</comment>
<evidence type="ECO:0000255" key="1">
    <source>
        <dbReference type="HAMAP-Rule" id="MF_01364"/>
    </source>
</evidence>
<evidence type="ECO:0000305" key="2"/>
<reference key="1">
    <citation type="submission" date="2007-08" db="EMBL/GenBank/DDBJ databases">
        <title>Complete sequence of Thermotoga lettingae TMO.</title>
        <authorList>
            <consortium name="US DOE Joint Genome Institute"/>
            <person name="Copeland A."/>
            <person name="Lucas S."/>
            <person name="Lapidus A."/>
            <person name="Barry K."/>
            <person name="Glavina del Rio T."/>
            <person name="Dalin E."/>
            <person name="Tice H."/>
            <person name="Pitluck S."/>
            <person name="Foster B."/>
            <person name="Bruce D."/>
            <person name="Schmutz J."/>
            <person name="Larimer F."/>
            <person name="Land M."/>
            <person name="Hauser L."/>
            <person name="Kyrpides N."/>
            <person name="Mikhailova N."/>
            <person name="Nelson K."/>
            <person name="Gogarten J.P."/>
            <person name="Noll K."/>
            <person name="Richardson P."/>
        </authorList>
    </citation>
    <scope>NUCLEOTIDE SEQUENCE [LARGE SCALE GENOMIC DNA]</scope>
    <source>
        <strain>ATCC BAA-301 / DSM 14385 / NBRC 107922 / TMO</strain>
    </source>
</reference>
<name>RS14Z_PSELT</name>
<proteinExistence type="inferred from homology"/>
<gene>
    <name evidence="1" type="primary">rpsZ</name>
    <name evidence="1" type="synonym">rpsN</name>
    <name type="ordered locus">Tlet_0592</name>
</gene>
<accession>A8F4S4</accession>
<organism>
    <name type="scientific">Pseudothermotoga lettingae (strain ATCC BAA-301 / DSM 14385 / NBRC 107922 / TMO)</name>
    <name type="common">Thermotoga lettingae</name>
    <dbReference type="NCBI Taxonomy" id="416591"/>
    <lineage>
        <taxon>Bacteria</taxon>
        <taxon>Thermotogati</taxon>
        <taxon>Thermotogota</taxon>
        <taxon>Thermotogae</taxon>
        <taxon>Thermotogales</taxon>
        <taxon>Thermotogaceae</taxon>
        <taxon>Pseudothermotoga</taxon>
    </lineage>
</organism>